<organism>
    <name type="scientific">Archaeoglobus fulgidus (strain ATCC 49558 / DSM 4304 / JCM 9628 / NBRC 100126 / VC-16)</name>
    <dbReference type="NCBI Taxonomy" id="224325"/>
    <lineage>
        <taxon>Archaea</taxon>
        <taxon>Methanobacteriati</taxon>
        <taxon>Methanobacteriota</taxon>
        <taxon>Archaeoglobi</taxon>
        <taxon>Archaeoglobales</taxon>
        <taxon>Archaeoglobaceae</taxon>
        <taxon>Archaeoglobus</taxon>
    </lineage>
</organism>
<reference key="1">
    <citation type="journal article" date="1997" name="Nature">
        <title>The complete genome sequence of the hyperthermophilic, sulphate-reducing archaeon Archaeoglobus fulgidus.</title>
        <authorList>
            <person name="Klenk H.-P."/>
            <person name="Clayton R.A."/>
            <person name="Tomb J.-F."/>
            <person name="White O."/>
            <person name="Nelson K.E."/>
            <person name="Ketchum K.A."/>
            <person name="Dodson R.J."/>
            <person name="Gwinn M.L."/>
            <person name="Hickey E.K."/>
            <person name="Peterson J.D."/>
            <person name="Richardson D.L."/>
            <person name="Kerlavage A.R."/>
            <person name="Graham D.E."/>
            <person name="Kyrpides N.C."/>
            <person name="Fleischmann R.D."/>
            <person name="Quackenbush J."/>
            <person name="Lee N.H."/>
            <person name="Sutton G.G."/>
            <person name="Gill S.R."/>
            <person name="Kirkness E.F."/>
            <person name="Dougherty B.A."/>
            <person name="McKenney K."/>
            <person name="Adams M.D."/>
            <person name="Loftus B.J."/>
            <person name="Peterson S.N."/>
            <person name="Reich C.I."/>
            <person name="McNeil L.K."/>
            <person name="Badger J.H."/>
            <person name="Glodek A."/>
            <person name="Zhou L."/>
            <person name="Overbeek R."/>
            <person name="Gocayne J.D."/>
            <person name="Weidman J.F."/>
            <person name="McDonald L.A."/>
            <person name="Utterback T.R."/>
            <person name="Cotton M.D."/>
            <person name="Spriggs T."/>
            <person name="Artiach P."/>
            <person name="Kaine B.P."/>
            <person name="Sykes S.M."/>
            <person name="Sadow P.W."/>
            <person name="D'Andrea K.P."/>
            <person name="Bowman C."/>
            <person name="Fujii C."/>
            <person name="Garland S.A."/>
            <person name="Mason T.M."/>
            <person name="Olsen G.J."/>
            <person name="Fraser C.M."/>
            <person name="Smith H.O."/>
            <person name="Woese C.R."/>
            <person name="Venter J.C."/>
        </authorList>
    </citation>
    <scope>NUCLEOTIDE SEQUENCE [LARGE SCALE GENOMIC DNA]</scope>
    <source>
        <strain>ATCC 49558 / DSM 4304 / JCM 9628 / NBRC 100126 / VC-16</strain>
    </source>
</reference>
<comment type="function">
    <text evidence="1">Involved in the maturation of [NiFe] hydrogenases. Required for nickel insertion into the metal center of the hydrogenase.</text>
</comment>
<comment type="similarity">
    <text evidence="1 2">Belongs to the HypA/HybF family.</text>
</comment>
<proteinExistence type="inferred from homology"/>
<name>HYPA_ARCFU</name>
<sequence>MHEMSFAEAIIRNVLRFAEEKQAKTVTSVRVRVGELLLINPEQLQFCFSVASKGTIAEGAKLEISVERADIRCLLCGRELSKDEMLCECGGFAQVKGGKDFILESVVVEV</sequence>
<gene>
    <name evidence="1" type="primary">hypA</name>
    <name type="ordered locus">AF_1367</name>
</gene>
<protein>
    <recommendedName>
        <fullName evidence="1">Hydrogenase maturation factor HypA</fullName>
    </recommendedName>
</protein>
<keyword id="KW-0479">Metal-binding</keyword>
<keyword id="KW-0533">Nickel</keyword>
<keyword id="KW-1185">Reference proteome</keyword>
<keyword id="KW-0862">Zinc</keyword>
<dbReference type="EMBL" id="AE000782">
    <property type="protein sequence ID" value="AAB89875.1"/>
    <property type="molecule type" value="Genomic_DNA"/>
</dbReference>
<dbReference type="PIR" id="F69420">
    <property type="entry name" value="F69420"/>
</dbReference>
<dbReference type="SMR" id="O28904"/>
<dbReference type="STRING" id="224325.AF_1367"/>
<dbReference type="PaxDb" id="224325-AF_1367"/>
<dbReference type="EnsemblBacteria" id="AAB89875">
    <property type="protein sequence ID" value="AAB89875"/>
    <property type="gene ID" value="AF_1367"/>
</dbReference>
<dbReference type="KEGG" id="afu:AF_1367"/>
<dbReference type="eggNOG" id="arCOG04426">
    <property type="taxonomic scope" value="Archaea"/>
</dbReference>
<dbReference type="HOGENOM" id="CLU_126929_2_1_2"/>
<dbReference type="OrthoDB" id="36835at2157"/>
<dbReference type="PhylomeDB" id="O28904"/>
<dbReference type="Proteomes" id="UP000002199">
    <property type="component" value="Chromosome"/>
</dbReference>
<dbReference type="GO" id="GO:0016151">
    <property type="term" value="F:nickel cation binding"/>
    <property type="evidence" value="ECO:0007669"/>
    <property type="project" value="UniProtKB-UniRule"/>
</dbReference>
<dbReference type="GO" id="GO:0008270">
    <property type="term" value="F:zinc ion binding"/>
    <property type="evidence" value="ECO:0007669"/>
    <property type="project" value="UniProtKB-UniRule"/>
</dbReference>
<dbReference type="GO" id="GO:0051604">
    <property type="term" value="P:protein maturation"/>
    <property type="evidence" value="ECO:0007669"/>
    <property type="project" value="InterPro"/>
</dbReference>
<dbReference type="GO" id="GO:0036211">
    <property type="term" value="P:protein modification process"/>
    <property type="evidence" value="ECO:0007669"/>
    <property type="project" value="UniProtKB-UniRule"/>
</dbReference>
<dbReference type="Gene3D" id="3.30.2320.80">
    <property type="match status" value="1"/>
</dbReference>
<dbReference type="HAMAP" id="MF_00213">
    <property type="entry name" value="HypA_HybF"/>
    <property type="match status" value="1"/>
</dbReference>
<dbReference type="InterPro" id="IPR020538">
    <property type="entry name" value="Hydgase_Ni_incorp_HypA/HybF_CS"/>
</dbReference>
<dbReference type="InterPro" id="IPR000688">
    <property type="entry name" value="HypA/HybF"/>
</dbReference>
<dbReference type="NCBIfam" id="TIGR00100">
    <property type="entry name" value="hypA"/>
    <property type="match status" value="1"/>
</dbReference>
<dbReference type="PANTHER" id="PTHR34535">
    <property type="entry name" value="HYDROGENASE MATURATION FACTOR HYPA"/>
    <property type="match status" value="1"/>
</dbReference>
<dbReference type="PANTHER" id="PTHR34535:SF3">
    <property type="entry name" value="HYDROGENASE MATURATION FACTOR HYPA"/>
    <property type="match status" value="1"/>
</dbReference>
<dbReference type="Pfam" id="PF01155">
    <property type="entry name" value="HypA"/>
    <property type="match status" value="1"/>
</dbReference>
<dbReference type="PIRSF" id="PIRSF004761">
    <property type="entry name" value="Hydrgn_mat_HypA"/>
    <property type="match status" value="1"/>
</dbReference>
<dbReference type="PROSITE" id="PS01249">
    <property type="entry name" value="HYPA"/>
    <property type="match status" value="1"/>
</dbReference>
<feature type="chain" id="PRO_0000129075" description="Hydrogenase maturation factor HypA">
    <location>
        <begin position="1"/>
        <end position="110"/>
    </location>
</feature>
<feature type="binding site" evidence="1">
    <location>
        <position position="2"/>
    </location>
    <ligand>
        <name>Ni(2+)</name>
        <dbReference type="ChEBI" id="CHEBI:49786"/>
    </ligand>
</feature>
<feature type="binding site" evidence="1">
    <location>
        <position position="73"/>
    </location>
    <ligand>
        <name>Zn(2+)</name>
        <dbReference type="ChEBI" id="CHEBI:29105"/>
    </ligand>
</feature>
<feature type="binding site" evidence="1">
    <location>
        <position position="76"/>
    </location>
    <ligand>
        <name>Zn(2+)</name>
        <dbReference type="ChEBI" id="CHEBI:29105"/>
    </ligand>
</feature>
<feature type="binding site" evidence="1">
    <location>
        <position position="87"/>
    </location>
    <ligand>
        <name>Zn(2+)</name>
        <dbReference type="ChEBI" id="CHEBI:29105"/>
    </ligand>
</feature>
<feature type="binding site" evidence="1">
    <location>
        <position position="89"/>
    </location>
    <ligand>
        <name>Zn(2+)</name>
        <dbReference type="ChEBI" id="CHEBI:29105"/>
    </ligand>
</feature>
<accession>O28904</accession>
<evidence type="ECO:0000255" key="1">
    <source>
        <dbReference type="HAMAP-Rule" id="MF_00213"/>
    </source>
</evidence>
<evidence type="ECO:0000305" key="2"/>